<gene>
    <name evidence="4" type="primary">RXLR41</name>
</gene>
<keyword id="KW-0325">Glycoprotein</keyword>
<keyword id="KW-1035">Host cytoplasm</keyword>
<keyword id="KW-1048">Host nucleus</keyword>
<keyword id="KW-0964">Secreted</keyword>
<keyword id="KW-0732">Signal</keyword>
<keyword id="KW-0843">Virulence</keyword>
<comment type="function">
    <text evidence="3">Secreted effector that dos not suppress the host cell death induced by cell death-inducing proteins.</text>
</comment>
<comment type="subcellular location">
    <subcellularLocation>
        <location evidence="3">Secreted</location>
    </subcellularLocation>
    <subcellularLocation>
        <location evidence="3">Host nucleus</location>
    </subcellularLocation>
    <subcellularLocation>
        <location evidence="3">Host cytoplasm</location>
    </subcellularLocation>
</comment>
<comment type="domain">
    <text evidence="6">The RxLR-dEER motif acts to carry the protein into the host cell cytoplasm through binding to cell surface phosphatidylinositol-3-phosphate.</text>
</comment>
<comment type="similarity">
    <text evidence="5">Belongs to the RxLR effector family.</text>
</comment>
<evidence type="ECO:0000255" key="1"/>
<evidence type="ECO:0000255" key="2">
    <source>
        <dbReference type="PROSITE-ProRule" id="PRU00498"/>
    </source>
</evidence>
<evidence type="ECO:0000269" key="3">
    <source>
    </source>
</evidence>
<evidence type="ECO:0000303" key="4">
    <source>
    </source>
</evidence>
<evidence type="ECO:0000305" key="5"/>
<evidence type="ECO:0000305" key="6">
    <source>
    </source>
</evidence>
<feature type="signal peptide" evidence="1">
    <location>
        <begin position="1"/>
        <end position="18"/>
    </location>
</feature>
<feature type="chain" id="PRO_0000447919" description="Secreted RxLR effector protein 41">
    <location>
        <begin position="19"/>
        <end position="183"/>
    </location>
</feature>
<feature type="short sequence motif" description="RxLR-dEER" evidence="6">
    <location>
        <begin position="41"/>
        <end position="65"/>
    </location>
</feature>
<feature type="glycosylation site" description="N-linked (GlcNAc...) asparagine" evidence="2">
    <location>
        <position position="88"/>
    </location>
</feature>
<reference key="1">
    <citation type="journal article" date="2018" name="Front. Plant Sci.">
        <title>In planta functional analysis and subcellular localization of the oomycete pathogen Plasmopara viticola candidate RXLR effector repertoire.</title>
        <authorList>
            <person name="Liu Y."/>
            <person name="Lan X."/>
            <person name="Song S."/>
            <person name="Yin L."/>
            <person name="Dry I.B."/>
            <person name="Qu J."/>
            <person name="Xiang J."/>
            <person name="Lu J."/>
        </authorList>
    </citation>
    <scope>NUCLEOTIDE SEQUENCE [MRNA]</scope>
    <scope>DOMAIN</scope>
    <scope>FUNCTION</scope>
    <scope>SUBCELLULAR LOCATION</scope>
</reference>
<sequence length="183" mass="20718">MLGFVTGVLAISAHVIVSQPNEHSPVVVARETYGLRDVIFRRLRSYETDTASARAEEGTSDIEERSDHEIPPDFYKRLASTSTPYVANLSHKAQIAAQALRKDAERSKGALELLKKYAELEGKMDAPKEEKNHVDRLKAAAFKEWNEKGLNLDQVRVLFADNKRRTSKYENLIEKIVGEYEKS</sequence>
<organism>
    <name type="scientific">Plasmopara viticola</name>
    <name type="common">Downy mildew of grapevine</name>
    <name type="synonym">Botrytis viticola</name>
    <dbReference type="NCBI Taxonomy" id="143451"/>
    <lineage>
        <taxon>Eukaryota</taxon>
        <taxon>Sar</taxon>
        <taxon>Stramenopiles</taxon>
        <taxon>Oomycota</taxon>
        <taxon>Peronosporales</taxon>
        <taxon>Peronosporaceae</taxon>
        <taxon>Plasmopara</taxon>
    </lineage>
</organism>
<accession>P0CV10</accession>
<protein>
    <recommendedName>
        <fullName evidence="4">Secreted RxLR effector protein 41</fullName>
    </recommendedName>
</protein>
<name>RLR41_PLAVT</name>
<dbReference type="SMR" id="P0CV10"/>
<dbReference type="GlyCosmos" id="P0CV10">
    <property type="glycosylation" value="1 site, No reported glycans"/>
</dbReference>
<dbReference type="GO" id="GO:0005576">
    <property type="term" value="C:extracellular region"/>
    <property type="evidence" value="ECO:0007669"/>
    <property type="project" value="UniProtKB-SubCell"/>
</dbReference>
<dbReference type="GO" id="GO:0030430">
    <property type="term" value="C:host cell cytoplasm"/>
    <property type="evidence" value="ECO:0007669"/>
    <property type="project" value="UniProtKB-SubCell"/>
</dbReference>
<dbReference type="GO" id="GO:0042025">
    <property type="term" value="C:host cell nucleus"/>
    <property type="evidence" value="ECO:0007669"/>
    <property type="project" value="UniProtKB-SubCell"/>
</dbReference>
<proteinExistence type="evidence at transcript level"/>